<feature type="chain" id="PRO_0000140573" description="Chorismate synthase">
    <location>
        <begin position="1"/>
        <end position="359"/>
    </location>
</feature>
<feature type="binding site" evidence="1">
    <location>
        <position position="47"/>
    </location>
    <ligand>
        <name>NADP(+)</name>
        <dbReference type="ChEBI" id="CHEBI:58349"/>
    </ligand>
</feature>
<feature type="binding site" evidence="1">
    <location>
        <begin position="123"/>
        <end position="125"/>
    </location>
    <ligand>
        <name>FMN</name>
        <dbReference type="ChEBI" id="CHEBI:58210"/>
    </ligand>
</feature>
<feature type="binding site" evidence="1">
    <location>
        <position position="283"/>
    </location>
    <ligand>
        <name>FMN</name>
        <dbReference type="ChEBI" id="CHEBI:58210"/>
    </ligand>
</feature>
<feature type="binding site" evidence="1">
    <location>
        <begin position="298"/>
        <end position="302"/>
    </location>
    <ligand>
        <name>FMN</name>
        <dbReference type="ChEBI" id="CHEBI:58210"/>
    </ligand>
</feature>
<feature type="binding site" evidence="1">
    <location>
        <position position="326"/>
    </location>
    <ligand>
        <name>FMN</name>
        <dbReference type="ChEBI" id="CHEBI:58210"/>
    </ligand>
</feature>
<accession>Q9Z6M2</accession>
<protein>
    <recommendedName>
        <fullName evidence="1">Chorismate synthase</fullName>
        <shortName evidence="1">CS</shortName>
        <ecNumber evidence="1">4.2.3.5</ecNumber>
    </recommendedName>
    <alternativeName>
        <fullName evidence="1">5-enolpyruvylshikimate-3-phosphate phospholyase</fullName>
    </alternativeName>
</protein>
<evidence type="ECO:0000255" key="1">
    <source>
        <dbReference type="HAMAP-Rule" id="MF_00300"/>
    </source>
</evidence>
<gene>
    <name evidence="1" type="primary">aroC</name>
    <name type="ordered locus">CPn_1037</name>
    <name type="ordered locus">CP_0815</name>
    <name type="ordered locus">CpB1077</name>
</gene>
<reference key="1">
    <citation type="journal article" date="1999" name="Nat. Genet.">
        <title>Comparative genomes of Chlamydia pneumoniae and C. trachomatis.</title>
        <authorList>
            <person name="Kalman S."/>
            <person name="Mitchell W.P."/>
            <person name="Marathe R."/>
            <person name="Lammel C.J."/>
            <person name="Fan J."/>
            <person name="Hyman R.W."/>
            <person name="Olinger L."/>
            <person name="Grimwood J."/>
            <person name="Davis R.W."/>
            <person name="Stephens R.S."/>
        </authorList>
    </citation>
    <scope>NUCLEOTIDE SEQUENCE [LARGE SCALE GENOMIC DNA]</scope>
    <source>
        <strain>CWL029</strain>
    </source>
</reference>
<reference key="2">
    <citation type="journal article" date="2000" name="Nucleic Acids Res.">
        <title>Genome sequences of Chlamydia trachomatis MoPn and Chlamydia pneumoniae AR39.</title>
        <authorList>
            <person name="Read T.D."/>
            <person name="Brunham R.C."/>
            <person name="Shen C."/>
            <person name="Gill S.R."/>
            <person name="Heidelberg J.F."/>
            <person name="White O."/>
            <person name="Hickey E.K."/>
            <person name="Peterson J.D."/>
            <person name="Utterback T.R."/>
            <person name="Berry K.J."/>
            <person name="Bass S."/>
            <person name="Linher K.D."/>
            <person name="Weidman J.F."/>
            <person name="Khouri H.M."/>
            <person name="Craven B."/>
            <person name="Bowman C."/>
            <person name="Dodson R.J."/>
            <person name="Gwinn M.L."/>
            <person name="Nelson W.C."/>
            <person name="DeBoy R.T."/>
            <person name="Kolonay J.F."/>
            <person name="McClarty G."/>
            <person name="Salzberg S.L."/>
            <person name="Eisen J.A."/>
            <person name="Fraser C.M."/>
        </authorList>
    </citation>
    <scope>NUCLEOTIDE SEQUENCE [LARGE SCALE GENOMIC DNA]</scope>
    <source>
        <strain>AR39</strain>
    </source>
</reference>
<reference key="3">
    <citation type="journal article" date="2000" name="Nucleic Acids Res.">
        <title>Comparison of whole genome sequences of Chlamydia pneumoniae J138 from Japan and CWL029 from USA.</title>
        <authorList>
            <person name="Shirai M."/>
            <person name="Hirakawa H."/>
            <person name="Kimoto M."/>
            <person name="Tabuchi M."/>
            <person name="Kishi F."/>
            <person name="Ouchi K."/>
            <person name="Shiba T."/>
            <person name="Ishii K."/>
            <person name="Hattori M."/>
            <person name="Kuhara S."/>
            <person name="Nakazawa T."/>
        </authorList>
    </citation>
    <scope>NUCLEOTIDE SEQUENCE [LARGE SCALE GENOMIC DNA]</scope>
    <source>
        <strain>J138</strain>
    </source>
</reference>
<reference key="4">
    <citation type="submission" date="2002-05" db="EMBL/GenBank/DDBJ databases">
        <title>The genome sequence of Chlamydia pneumoniae TW183 and comparison with other Chlamydia strains based on whole genome sequence analysis.</title>
        <authorList>
            <person name="Geng M.M."/>
            <person name="Schuhmacher A."/>
            <person name="Muehldorfer I."/>
            <person name="Bensch K.W."/>
            <person name="Schaefer K.P."/>
            <person name="Schneider S."/>
            <person name="Pohl T."/>
            <person name="Essig A."/>
            <person name="Marre R."/>
            <person name="Melchers K."/>
        </authorList>
    </citation>
    <scope>NUCLEOTIDE SEQUENCE [LARGE SCALE GENOMIC DNA]</scope>
    <source>
        <strain>TW-183</strain>
    </source>
</reference>
<proteinExistence type="inferred from homology"/>
<organism>
    <name type="scientific">Chlamydia pneumoniae</name>
    <name type="common">Chlamydophila pneumoniae</name>
    <dbReference type="NCBI Taxonomy" id="83558"/>
    <lineage>
        <taxon>Bacteria</taxon>
        <taxon>Pseudomonadati</taxon>
        <taxon>Chlamydiota</taxon>
        <taxon>Chlamydiia</taxon>
        <taxon>Chlamydiales</taxon>
        <taxon>Chlamydiaceae</taxon>
        <taxon>Chlamydia/Chlamydophila group</taxon>
        <taxon>Chlamydia</taxon>
    </lineage>
</organism>
<name>AROC_CHLPN</name>
<sequence length="359" mass="38803">MKNSFGSLFSFTTWGESHGPSIGVVIDGCPAGLELHESDFVPAMKRRRPGNPGTSSRKENDIVQILSGVYKGKTTGTPLSLQILNTDVDSSPYENSERLYRPGHSQYTYEKKFGIVDPNGGGRSSARETACRVAAGVVAEKFLANQNIFTLAYLSSLGSLTLPHYLKISPELIHKIHTSPFYSPLPNEKIQEILTSLHDDSDSLGGVISFITSPIHDFLGEPLFGKVHALLASALMSIPAAKGFEIGKGFASAQMRGSQYTDPFVMEGENITLKSNNCGGTLGGITIGVPIEGRIAFKPTSSIKRPCATVTKTKKETTYRTPQTGRHDPCVAIRAVPVVEAMINLVLADLVLYQRCSKL</sequence>
<dbReference type="EC" id="4.2.3.5" evidence="1"/>
<dbReference type="EMBL" id="AE001363">
    <property type="protein sequence ID" value="AAD19174.1"/>
    <property type="molecule type" value="Genomic_DNA"/>
</dbReference>
<dbReference type="EMBL" id="AE002161">
    <property type="protein sequence ID" value="AAF38611.1"/>
    <property type="molecule type" value="Genomic_DNA"/>
</dbReference>
<dbReference type="EMBL" id="BA000008">
    <property type="protein sequence ID" value="BAA99244.1"/>
    <property type="molecule type" value="Genomic_DNA"/>
</dbReference>
<dbReference type="EMBL" id="AE009440">
    <property type="protein sequence ID" value="AAP99006.1"/>
    <property type="molecule type" value="Genomic_DNA"/>
</dbReference>
<dbReference type="PIR" id="A72004">
    <property type="entry name" value="A72004"/>
</dbReference>
<dbReference type="PIR" id="B86620">
    <property type="entry name" value="B86620"/>
</dbReference>
<dbReference type="RefSeq" id="NP_225231.1">
    <property type="nucleotide sequence ID" value="NC_000922.1"/>
</dbReference>
<dbReference type="RefSeq" id="WP_010883670.1">
    <property type="nucleotide sequence ID" value="NZ_LN847257.1"/>
</dbReference>
<dbReference type="SMR" id="Q9Z6M2"/>
<dbReference type="STRING" id="406984.CPK_ORF00464"/>
<dbReference type="GeneID" id="45051095"/>
<dbReference type="KEGG" id="cpa:CP_0815"/>
<dbReference type="KEGG" id="cpj:aroC"/>
<dbReference type="KEGG" id="cpn:CPn_1037"/>
<dbReference type="KEGG" id="cpt:CpB1077"/>
<dbReference type="PATRIC" id="fig|115713.3.peg.1135"/>
<dbReference type="eggNOG" id="COG0082">
    <property type="taxonomic scope" value="Bacteria"/>
</dbReference>
<dbReference type="HOGENOM" id="CLU_034547_0_0_0"/>
<dbReference type="OrthoDB" id="9771806at2"/>
<dbReference type="UniPathway" id="UPA00053">
    <property type="reaction ID" value="UER00090"/>
</dbReference>
<dbReference type="Proteomes" id="UP000000583">
    <property type="component" value="Chromosome"/>
</dbReference>
<dbReference type="Proteomes" id="UP000000801">
    <property type="component" value="Chromosome"/>
</dbReference>
<dbReference type="GO" id="GO:0005829">
    <property type="term" value="C:cytosol"/>
    <property type="evidence" value="ECO:0007669"/>
    <property type="project" value="TreeGrafter"/>
</dbReference>
<dbReference type="GO" id="GO:0004107">
    <property type="term" value="F:chorismate synthase activity"/>
    <property type="evidence" value="ECO:0007669"/>
    <property type="project" value="UniProtKB-UniRule"/>
</dbReference>
<dbReference type="GO" id="GO:0010181">
    <property type="term" value="F:FMN binding"/>
    <property type="evidence" value="ECO:0007669"/>
    <property type="project" value="TreeGrafter"/>
</dbReference>
<dbReference type="GO" id="GO:0008652">
    <property type="term" value="P:amino acid biosynthetic process"/>
    <property type="evidence" value="ECO:0007669"/>
    <property type="project" value="UniProtKB-KW"/>
</dbReference>
<dbReference type="GO" id="GO:0009073">
    <property type="term" value="P:aromatic amino acid family biosynthetic process"/>
    <property type="evidence" value="ECO:0007669"/>
    <property type="project" value="UniProtKB-KW"/>
</dbReference>
<dbReference type="GO" id="GO:0009423">
    <property type="term" value="P:chorismate biosynthetic process"/>
    <property type="evidence" value="ECO:0007669"/>
    <property type="project" value="UniProtKB-UniRule"/>
</dbReference>
<dbReference type="CDD" id="cd07304">
    <property type="entry name" value="Chorismate_synthase"/>
    <property type="match status" value="1"/>
</dbReference>
<dbReference type="Gene3D" id="3.60.150.10">
    <property type="entry name" value="Chorismate synthase AroC"/>
    <property type="match status" value="1"/>
</dbReference>
<dbReference type="HAMAP" id="MF_00300">
    <property type="entry name" value="Chorismate_synth"/>
    <property type="match status" value="1"/>
</dbReference>
<dbReference type="InterPro" id="IPR000453">
    <property type="entry name" value="Chorismate_synth"/>
</dbReference>
<dbReference type="InterPro" id="IPR035904">
    <property type="entry name" value="Chorismate_synth_AroC_sf"/>
</dbReference>
<dbReference type="InterPro" id="IPR020541">
    <property type="entry name" value="Chorismate_synthase_CS"/>
</dbReference>
<dbReference type="NCBIfam" id="TIGR00033">
    <property type="entry name" value="aroC"/>
    <property type="match status" value="1"/>
</dbReference>
<dbReference type="NCBIfam" id="NF003793">
    <property type="entry name" value="PRK05382.1"/>
    <property type="match status" value="1"/>
</dbReference>
<dbReference type="PANTHER" id="PTHR21085">
    <property type="entry name" value="CHORISMATE SYNTHASE"/>
    <property type="match status" value="1"/>
</dbReference>
<dbReference type="PANTHER" id="PTHR21085:SF0">
    <property type="entry name" value="CHORISMATE SYNTHASE"/>
    <property type="match status" value="1"/>
</dbReference>
<dbReference type="Pfam" id="PF01264">
    <property type="entry name" value="Chorismate_synt"/>
    <property type="match status" value="1"/>
</dbReference>
<dbReference type="PIRSF" id="PIRSF001456">
    <property type="entry name" value="Chorismate_synth"/>
    <property type="match status" value="1"/>
</dbReference>
<dbReference type="SUPFAM" id="SSF103263">
    <property type="entry name" value="Chorismate synthase, AroC"/>
    <property type="match status" value="1"/>
</dbReference>
<dbReference type="PROSITE" id="PS00787">
    <property type="entry name" value="CHORISMATE_SYNTHASE_1"/>
    <property type="match status" value="1"/>
</dbReference>
<dbReference type="PROSITE" id="PS00788">
    <property type="entry name" value="CHORISMATE_SYNTHASE_2"/>
    <property type="match status" value="1"/>
</dbReference>
<dbReference type="PROSITE" id="PS00789">
    <property type="entry name" value="CHORISMATE_SYNTHASE_3"/>
    <property type="match status" value="1"/>
</dbReference>
<keyword id="KW-0028">Amino-acid biosynthesis</keyword>
<keyword id="KW-0057">Aromatic amino acid biosynthesis</keyword>
<keyword id="KW-0274">FAD</keyword>
<keyword id="KW-0285">Flavoprotein</keyword>
<keyword id="KW-0288">FMN</keyword>
<keyword id="KW-0456">Lyase</keyword>
<keyword id="KW-0521">NADP</keyword>
<comment type="function">
    <text evidence="1">Catalyzes the anti-1,4-elimination of the C-3 phosphate and the C-6 proR hydrogen from 5-enolpyruvylshikimate-3-phosphate (EPSP) to yield chorismate, which is the branch point compound that serves as the starting substrate for the three terminal pathways of aromatic amino acid biosynthesis. This reaction introduces a second double bond into the aromatic ring system.</text>
</comment>
<comment type="catalytic activity">
    <reaction evidence="1">
        <text>5-O-(1-carboxyvinyl)-3-phosphoshikimate = chorismate + phosphate</text>
        <dbReference type="Rhea" id="RHEA:21020"/>
        <dbReference type="ChEBI" id="CHEBI:29748"/>
        <dbReference type="ChEBI" id="CHEBI:43474"/>
        <dbReference type="ChEBI" id="CHEBI:57701"/>
        <dbReference type="EC" id="4.2.3.5"/>
    </reaction>
</comment>
<comment type="cofactor">
    <cofactor evidence="1">
        <name>FMNH2</name>
        <dbReference type="ChEBI" id="CHEBI:57618"/>
    </cofactor>
    <text evidence="1">Reduced FMN (FMNH(2)).</text>
</comment>
<comment type="pathway">
    <text evidence="1">Metabolic intermediate biosynthesis; chorismate biosynthesis; chorismate from D-erythrose 4-phosphate and phosphoenolpyruvate: step 7/7.</text>
</comment>
<comment type="subunit">
    <text evidence="1">Homotetramer.</text>
</comment>
<comment type="similarity">
    <text evidence="1">Belongs to the chorismate synthase family.</text>
</comment>